<name>RUTC_ECOL5</name>
<organism>
    <name type="scientific">Escherichia coli O6:K15:H31 (strain 536 / UPEC)</name>
    <dbReference type="NCBI Taxonomy" id="362663"/>
    <lineage>
        <taxon>Bacteria</taxon>
        <taxon>Pseudomonadati</taxon>
        <taxon>Pseudomonadota</taxon>
        <taxon>Gammaproteobacteria</taxon>
        <taxon>Enterobacterales</taxon>
        <taxon>Enterobacteriaceae</taxon>
        <taxon>Escherichia</taxon>
    </lineage>
</organism>
<evidence type="ECO:0000255" key="1">
    <source>
        <dbReference type="HAMAP-Rule" id="MF_00831"/>
    </source>
</evidence>
<proteinExistence type="inferred from homology"/>
<dbReference type="EC" id="3.5.-.-" evidence="1"/>
<dbReference type="EMBL" id="CP000247">
    <property type="protein sequence ID" value="ABG69022.1"/>
    <property type="molecule type" value="Genomic_DNA"/>
</dbReference>
<dbReference type="RefSeq" id="WP_001126780.1">
    <property type="nucleotide sequence ID" value="NC_008253.1"/>
</dbReference>
<dbReference type="SMR" id="Q0TJ57"/>
<dbReference type="GeneID" id="75171086"/>
<dbReference type="KEGG" id="ecp:ECP_1009"/>
<dbReference type="HOGENOM" id="CLU_100715_7_3_6"/>
<dbReference type="Proteomes" id="UP000009182">
    <property type="component" value="Chromosome"/>
</dbReference>
<dbReference type="GO" id="GO:0005829">
    <property type="term" value="C:cytosol"/>
    <property type="evidence" value="ECO:0007669"/>
    <property type="project" value="TreeGrafter"/>
</dbReference>
<dbReference type="GO" id="GO:0019239">
    <property type="term" value="F:deaminase activity"/>
    <property type="evidence" value="ECO:0007669"/>
    <property type="project" value="TreeGrafter"/>
</dbReference>
<dbReference type="GO" id="GO:0019740">
    <property type="term" value="P:nitrogen utilization"/>
    <property type="evidence" value="ECO:0007669"/>
    <property type="project" value="UniProtKB-UniRule"/>
</dbReference>
<dbReference type="GO" id="GO:0006212">
    <property type="term" value="P:uracil catabolic process"/>
    <property type="evidence" value="ECO:0007669"/>
    <property type="project" value="UniProtKB-UniRule"/>
</dbReference>
<dbReference type="CDD" id="cd00448">
    <property type="entry name" value="YjgF_YER057c_UK114_family"/>
    <property type="match status" value="1"/>
</dbReference>
<dbReference type="FunFam" id="3.30.1330.40:FF:000003">
    <property type="entry name" value="Putative aminoacrylate peracid reductase RutC"/>
    <property type="match status" value="1"/>
</dbReference>
<dbReference type="Gene3D" id="3.30.1330.40">
    <property type="entry name" value="RutC-like"/>
    <property type="match status" value="1"/>
</dbReference>
<dbReference type="HAMAP" id="MF_00831">
    <property type="entry name" value="RutC"/>
    <property type="match status" value="1"/>
</dbReference>
<dbReference type="InterPro" id="IPR019897">
    <property type="entry name" value="RidA_CS"/>
</dbReference>
<dbReference type="InterPro" id="IPR019898">
    <property type="entry name" value="RutC"/>
</dbReference>
<dbReference type="InterPro" id="IPR035959">
    <property type="entry name" value="RutC-like_sf"/>
</dbReference>
<dbReference type="InterPro" id="IPR006175">
    <property type="entry name" value="YjgF/YER057c/UK114"/>
</dbReference>
<dbReference type="NCBIfam" id="TIGR03610">
    <property type="entry name" value="RutC"/>
    <property type="match status" value="1"/>
</dbReference>
<dbReference type="PANTHER" id="PTHR11803">
    <property type="entry name" value="2-IMINOBUTANOATE/2-IMINOPROPANOATE DEAMINASE RIDA"/>
    <property type="match status" value="1"/>
</dbReference>
<dbReference type="PANTHER" id="PTHR11803:SF58">
    <property type="entry name" value="PROTEIN HMF1-RELATED"/>
    <property type="match status" value="1"/>
</dbReference>
<dbReference type="Pfam" id="PF01042">
    <property type="entry name" value="Ribonuc_L-PSP"/>
    <property type="match status" value="1"/>
</dbReference>
<dbReference type="SUPFAM" id="SSF55298">
    <property type="entry name" value="YjgF-like"/>
    <property type="match status" value="1"/>
</dbReference>
<dbReference type="PROSITE" id="PS01094">
    <property type="entry name" value="UPF0076"/>
    <property type="match status" value="1"/>
</dbReference>
<protein>
    <recommendedName>
        <fullName evidence="1">3-aminoacrylate deaminase RutC</fullName>
        <shortName evidence="1">3-AA deaminase</shortName>
        <ecNumber evidence="1">3.5.-.-</ecNumber>
    </recommendedName>
</protein>
<accession>Q0TJ57</accession>
<gene>
    <name evidence="1" type="primary">rutC</name>
    <name type="ordered locus">ECP_1009</name>
</gene>
<feature type="chain" id="PRO_0000402745" description="3-aminoacrylate deaminase RutC">
    <location>
        <begin position="1"/>
        <end position="128"/>
    </location>
</feature>
<keyword id="KW-0378">Hydrolase</keyword>
<reference key="1">
    <citation type="journal article" date="2006" name="Mol. Microbiol.">
        <title>Role of pathogenicity island-associated integrases in the genome plasticity of uropathogenic Escherichia coli strain 536.</title>
        <authorList>
            <person name="Hochhut B."/>
            <person name="Wilde C."/>
            <person name="Balling G."/>
            <person name="Middendorf B."/>
            <person name="Dobrindt U."/>
            <person name="Brzuszkiewicz E."/>
            <person name="Gottschalk G."/>
            <person name="Carniel E."/>
            <person name="Hacker J."/>
        </authorList>
    </citation>
    <scope>NUCLEOTIDE SEQUENCE [LARGE SCALE GENOMIC DNA]</scope>
    <source>
        <strain>536 / UPEC</strain>
    </source>
</reference>
<comment type="function">
    <text evidence="1">Involved in pyrimidine catabolism. Catalyzes the deamination of 3-aminoacrylate to malonic semialdehyde, a reaction that can also occur spontaneously. RutC may facilitate the reaction and modulate the metabolic fitness, rather than catalyzing essential functions.</text>
</comment>
<comment type="catalytic activity">
    <reaction evidence="1">
        <text>(Z)-3-aminoacrylate + H2O + H(+) = 3-oxopropanoate + NH4(+)</text>
        <dbReference type="Rhea" id="RHEA:34947"/>
        <dbReference type="ChEBI" id="CHEBI:15377"/>
        <dbReference type="ChEBI" id="CHEBI:15378"/>
        <dbReference type="ChEBI" id="CHEBI:28938"/>
        <dbReference type="ChEBI" id="CHEBI:33190"/>
        <dbReference type="ChEBI" id="CHEBI:59894"/>
    </reaction>
</comment>
<comment type="subunit">
    <text evidence="1">Homotrimer.</text>
</comment>
<comment type="similarity">
    <text evidence="1">Belongs to the RutC family.</text>
</comment>
<sequence length="128" mass="13763">MPKSVIIPAGSSAPLAPFVPGTLADGVVYVSGTLAFDQHNNVLFADDPKAQTRHVLETIRKVIETAGGTMADVTFNSIFITDWKNYAAINEIYAEFFPGDKPARFCIQCGLVKPDALVEIATIAHIAK</sequence>